<keyword id="KW-0963">Cytoplasm</keyword>
<keyword id="KW-0456">Lyase</keyword>
<keyword id="KW-1185">Reference proteome</keyword>
<keyword id="KW-0704">Schiff base</keyword>
<sequence length="223" mass="24007">MEVKDILKTVDHTLLATTATWPEIQTILDDAMAYETASACIPASYVKKAAEYVSGKLAICTVIGFPNGYSTTAAKVFECQDAIQNGADEIDMVINLTDVKNGDFDTVEEEIRQIKAKCQDHILKVIVETCQLTKEELIELCGVVTRSGADFIKTSTGFSTAGATFEDVEVMAKYVGEGVKIKAAGGISSLEDAKTFIALGASRLGTSRIIKIVKNEATKTDSY</sequence>
<feature type="chain" id="PRO_0000057274" description="Deoxyribose-phosphate aldolase">
    <location>
        <begin position="1"/>
        <end position="223"/>
    </location>
</feature>
<feature type="active site" description="Proton donor/acceptor" evidence="1">
    <location>
        <position position="91"/>
    </location>
</feature>
<feature type="active site" description="Schiff-base intermediate with acetaldehyde" evidence="1">
    <location>
        <position position="153"/>
    </location>
</feature>
<feature type="active site" description="Proton donor/acceptor" evidence="1">
    <location>
        <position position="182"/>
    </location>
</feature>
<proteinExistence type="inferred from homology"/>
<accession>Q99Y51</accession>
<accession>Q48WS2</accession>
<evidence type="ECO:0000255" key="1">
    <source>
        <dbReference type="HAMAP-Rule" id="MF_00114"/>
    </source>
</evidence>
<name>DEOC_STRP1</name>
<dbReference type="EC" id="4.1.2.4" evidence="1"/>
<dbReference type="EMBL" id="AE004092">
    <property type="protein sequence ID" value="AAK34581.1"/>
    <property type="molecule type" value="Genomic_DNA"/>
</dbReference>
<dbReference type="EMBL" id="CP000017">
    <property type="protein sequence ID" value="AAZ52203.1"/>
    <property type="molecule type" value="Genomic_DNA"/>
</dbReference>
<dbReference type="RefSeq" id="NP_269860.1">
    <property type="nucleotide sequence ID" value="NC_002737.2"/>
</dbReference>
<dbReference type="SMR" id="Q99Y51"/>
<dbReference type="PaxDb" id="1314-HKU360_01706"/>
<dbReference type="KEGG" id="spy:SPy_1867"/>
<dbReference type="KEGG" id="spz:M5005_Spy1585"/>
<dbReference type="PATRIC" id="fig|160490.10.peg.1619"/>
<dbReference type="HOGENOM" id="CLU_053595_0_2_9"/>
<dbReference type="OMA" id="AAYCVNP"/>
<dbReference type="UniPathway" id="UPA00002">
    <property type="reaction ID" value="UER00468"/>
</dbReference>
<dbReference type="Proteomes" id="UP000000750">
    <property type="component" value="Chromosome"/>
</dbReference>
<dbReference type="GO" id="GO:0005737">
    <property type="term" value="C:cytoplasm"/>
    <property type="evidence" value="ECO:0007669"/>
    <property type="project" value="UniProtKB-SubCell"/>
</dbReference>
<dbReference type="GO" id="GO:0004139">
    <property type="term" value="F:deoxyribose-phosphate aldolase activity"/>
    <property type="evidence" value="ECO:0007669"/>
    <property type="project" value="UniProtKB-UniRule"/>
</dbReference>
<dbReference type="GO" id="GO:0006018">
    <property type="term" value="P:2-deoxyribose 1-phosphate catabolic process"/>
    <property type="evidence" value="ECO:0007669"/>
    <property type="project" value="UniProtKB-UniRule"/>
</dbReference>
<dbReference type="GO" id="GO:0016052">
    <property type="term" value="P:carbohydrate catabolic process"/>
    <property type="evidence" value="ECO:0007669"/>
    <property type="project" value="TreeGrafter"/>
</dbReference>
<dbReference type="GO" id="GO:0009264">
    <property type="term" value="P:deoxyribonucleotide catabolic process"/>
    <property type="evidence" value="ECO:0007669"/>
    <property type="project" value="InterPro"/>
</dbReference>
<dbReference type="CDD" id="cd00959">
    <property type="entry name" value="DeoC"/>
    <property type="match status" value="1"/>
</dbReference>
<dbReference type="FunFam" id="3.20.20.70:FF:000044">
    <property type="entry name" value="Deoxyribose-phosphate aldolase"/>
    <property type="match status" value="1"/>
</dbReference>
<dbReference type="Gene3D" id="3.20.20.70">
    <property type="entry name" value="Aldolase class I"/>
    <property type="match status" value="1"/>
</dbReference>
<dbReference type="HAMAP" id="MF_00114">
    <property type="entry name" value="DeoC_type1"/>
    <property type="match status" value="1"/>
</dbReference>
<dbReference type="InterPro" id="IPR013785">
    <property type="entry name" value="Aldolase_TIM"/>
</dbReference>
<dbReference type="InterPro" id="IPR011343">
    <property type="entry name" value="DeoC"/>
</dbReference>
<dbReference type="InterPro" id="IPR002915">
    <property type="entry name" value="DeoC/FbaB/LacD_aldolase"/>
</dbReference>
<dbReference type="InterPro" id="IPR028581">
    <property type="entry name" value="DeoC_typeI"/>
</dbReference>
<dbReference type="NCBIfam" id="TIGR00126">
    <property type="entry name" value="deoC"/>
    <property type="match status" value="1"/>
</dbReference>
<dbReference type="PANTHER" id="PTHR10889">
    <property type="entry name" value="DEOXYRIBOSE-PHOSPHATE ALDOLASE"/>
    <property type="match status" value="1"/>
</dbReference>
<dbReference type="PANTHER" id="PTHR10889:SF1">
    <property type="entry name" value="DEOXYRIBOSE-PHOSPHATE ALDOLASE"/>
    <property type="match status" value="1"/>
</dbReference>
<dbReference type="Pfam" id="PF01791">
    <property type="entry name" value="DeoC"/>
    <property type="match status" value="1"/>
</dbReference>
<dbReference type="PIRSF" id="PIRSF001357">
    <property type="entry name" value="DeoC"/>
    <property type="match status" value="1"/>
</dbReference>
<dbReference type="SMART" id="SM01133">
    <property type="entry name" value="DeoC"/>
    <property type="match status" value="1"/>
</dbReference>
<dbReference type="SUPFAM" id="SSF51569">
    <property type="entry name" value="Aldolase"/>
    <property type="match status" value="1"/>
</dbReference>
<comment type="function">
    <text evidence="1">Catalyzes a reversible aldol reaction between acetaldehyde and D-glyceraldehyde 3-phosphate to generate 2-deoxy-D-ribose 5-phosphate.</text>
</comment>
<comment type="catalytic activity">
    <reaction evidence="1">
        <text>2-deoxy-D-ribose 5-phosphate = D-glyceraldehyde 3-phosphate + acetaldehyde</text>
        <dbReference type="Rhea" id="RHEA:12821"/>
        <dbReference type="ChEBI" id="CHEBI:15343"/>
        <dbReference type="ChEBI" id="CHEBI:59776"/>
        <dbReference type="ChEBI" id="CHEBI:62877"/>
        <dbReference type="EC" id="4.1.2.4"/>
    </reaction>
</comment>
<comment type="pathway">
    <text evidence="1">Carbohydrate degradation; 2-deoxy-D-ribose 1-phosphate degradation; D-glyceraldehyde 3-phosphate and acetaldehyde from 2-deoxy-alpha-D-ribose 1-phosphate: step 2/2.</text>
</comment>
<comment type="subcellular location">
    <subcellularLocation>
        <location evidence="1">Cytoplasm</location>
    </subcellularLocation>
</comment>
<comment type="similarity">
    <text evidence="1">Belongs to the DeoC/FbaB aldolase family. DeoC type 1 subfamily.</text>
</comment>
<organism>
    <name type="scientific">Streptococcus pyogenes serotype M1</name>
    <dbReference type="NCBI Taxonomy" id="301447"/>
    <lineage>
        <taxon>Bacteria</taxon>
        <taxon>Bacillati</taxon>
        <taxon>Bacillota</taxon>
        <taxon>Bacilli</taxon>
        <taxon>Lactobacillales</taxon>
        <taxon>Streptococcaceae</taxon>
        <taxon>Streptococcus</taxon>
    </lineage>
</organism>
<gene>
    <name evidence="1" type="primary">deoC</name>
    <name type="ordered locus">SPy_1867</name>
    <name type="ordered locus">M5005_Spy1585</name>
</gene>
<reference key="1">
    <citation type="journal article" date="2001" name="Proc. Natl. Acad. Sci. U.S.A.">
        <title>Complete genome sequence of an M1 strain of Streptococcus pyogenes.</title>
        <authorList>
            <person name="Ferretti J.J."/>
            <person name="McShan W.M."/>
            <person name="Ajdic D.J."/>
            <person name="Savic D.J."/>
            <person name="Savic G."/>
            <person name="Lyon K."/>
            <person name="Primeaux C."/>
            <person name="Sezate S."/>
            <person name="Suvorov A.N."/>
            <person name="Kenton S."/>
            <person name="Lai H.S."/>
            <person name="Lin S.P."/>
            <person name="Qian Y."/>
            <person name="Jia H.G."/>
            <person name="Najar F.Z."/>
            <person name="Ren Q."/>
            <person name="Zhu H."/>
            <person name="Song L."/>
            <person name="White J."/>
            <person name="Yuan X."/>
            <person name="Clifton S.W."/>
            <person name="Roe B.A."/>
            <person name="McLaughlin R.E."/>
        </authorList>
    </citation>
    <scope>NUCLEOTIDE SEQUENCE [LARGE SCALE GENOMIC DNA]</scope>
    <source>
        <strain>ATCC 700294 / SF370 / Serotype M1</strain>
    </source>
</reference>
<reference key="2">
    <citation type="journal article" date="2005" name="J. Infect. Dis.">
        <title>Evolutionary origin and emergence of a highly successful clone of serotype M1 group A Streptococcus involved multiple horizontal gene transfer events.</title>
        <authorList>
            <person name="Sumby P."/>
            <person name="Porcella S.F."/>
            <person name="Madrigal A.G."/>
            <person name="Barbian K.D."/>
            <person name="Virtaneva K."/>
            <person name="Ricklefs S.M."/>
            <person name="Sturdevant D.E."/>
            <person name="Graham M.R."/>
            <person name="Vuopio-Varkila J."/>
            <person name="Hoe N.P."/>
            <person name="Musser J.M."/>
        </authorList>
    </citation>
    <scope>NUCLEOTIDE SEQUENCE [LARGE SCALE GENOMIC DNA]</scope>
    <source>
        <strain>ATCC BAA-947 / MGAS5005 / Serotype M1</strain>
    </source>
</reference>
<protein>
    <recommendedName>
        <fullName evidence="1">Deoxyribose-phosphate aldolase</fullName>
        <shortName evidence="1">DERA</shortName>
        <ecNumber evidence="1">4.1.2.4</ecNumber>
    </recommendedName>
    <alternativeName>
        <fullName evidence="1">2-deoxy-D-ribose 5-phosphate aldolase</fullName>
    </alternativeName>
    <alternativeName>
        <fullName evidence="1">Phosphodeoxyriboaldolase</fullName>
        <shortName evidence="1">Deoxyriboaldolase</shortName>
    </alternativeName>
</protein>